<proteinExistence type="inferred from homology"/>
<name>GLSA_BRUA1</name>
<evidence type="ECO:0000255" key="1">
    <source>
        <dbReference type="HAMAP-Rule" id="MF_00313"/>
    </source>
</evidence>
<organism>
    <name type="scientific">Brucella abortus (strain S19)</name>
    <dbReference type="NCBI Taxonomy" id="430066"/>
    <lineage>
        <taxon>Bacteria</taxon>
        <taxon>Pseudomonadati</taxon>
        <taxon>Pseudomonadota</taxon>
        <taxon>Alphaproteobacteria</taxon>
        <taxon>Hyphomicrobiales</taxon>
        <taxon>Brucellaceae</taxon>
        <taxon>Brucella/Ochrobactrum group</taxon>
        <taxon>Brucella</taxon>
    </lineage>
</organism>
<dbReference type="EC" id="3.5.1.2" evidence="1"/>
<dbReference type="EMBL" id="CP000888">
    <property type="protein sequence ID" value="ACD74290.1"/>
    <property type="molecule type" value="Genomic_DNA"/>
</dbReference>
<dbReference type="RefSeq" id="WP_002967336.1">
    <property type="nucleotide sequence ID" value="NC_010740.1"/>
</dbReference>
<dbReference type="SMR" id="B2SBQ3"/>
<dbReference type="DNASU" id="3827366"/>
<dbReference type="GeneID" id="93015291"/>
<dbReference type="KEGG" id="bmc:BAbS19_II07970"/>
<dbReference type="HOGENOM" id="CLU_027932_1_0_5"/>
<dbReference type="Proteomes" id="UP000002565">
    <property type="component" value="Chromosome 2"/>
</dbReference>
<dbReference type="GO" id="GO:0004359">
    <property type="term" value="F:glutaminase activity"/>
    <property type="evidence" value="ECO:0007669"/>
    <property type="project" value="UniProtKB-UniRule"/>
</dbReference>
<dbReference type="GO" id="GO:0006537">
    <property type="term" value="P:glutamate biosynthetic process"/>
    <property type="evidence" value="ECO:0007669"/>
    <property type="project" value="TreeGrafter"/>
</dbReference>
<dbReference type="GO" id="GO:0006543">
    <property type="term" value="P:glutamine catabolic process"/>
    <property type="evidence" value="ECO:0007669"/>
    <property type="project" value="TreeGrafter"/>
</dbReference>
<dbReference type="Gene3D" id="3.40.710.10">
    <property type="entry name" value="DD-peptidase/beta-lactamase superfamily"/>
    <property type="match status" value="1"/>
</dbReference>
<dbReference type="HAMAP" id="MF_00313">
    <property type="entry name" value="Glutaminase"/>
    <property type="match status" value="1"/>
</dbReference>
<dbReference type="InterPro" id="IPR012338">
    <property type="entry name" value="Beta-lactam/transpept-like"/>
</dbReference>
<dbReference type="InterPro" id="IPR015868">
    <property type="entry name" value="Glutaminase"/>
</dbReference>
<dbReference type="NCBIfam" id="TIGR03814">
    <property type="entry name" value="Gln_ase"/>
    <property type="match status" value="1"/>
</dbReference>
<dbReference type="NCBIfam" id="NF009020">
    <property type="entry name" value="PRK12356.1"/>
    <property type="match status" value="1"/>
</dbReference>
<dbReference type="PANTHER" id="PTHR12544">
    <property type="entry name" value="GLUTAMINASE"/>
    <property type="match status" value="1"/>
</dbReference>
<dbReference type="PANTHER" id="PTHR12544:SF48">
    <property type="entry name" value="GLUTAMINASE 1"/>
    <property type="match status" value="1"/>
</dbReference>
<dbReference type="Pfam" id="PF04960">
    <property type="entry name" value="Glutaminase"/>
    <property type="match status" value="1"/>
</dbReference>
<dbReference type="SUPFAM" id="SSF56601">
    <property type="entry name" value="beta-lactamase/transpeptidase-like"/>
    <property type="match status" value="1"/>
</dbReference>
<keyword id="KW-0378">Hydrolase</keyword>
<protein>
    <recommendedName>
        <fullName evidence="1">Glutaminase</fullName>
        <ecNumber evidence="1">3.5.1.2</ecNumber>
    </recommendedName>
</protein>
<comment type="catalytic activity">
    <reaction evidence="1">
        <text>L-glutamine + H2O = L-glutamate + NH4(+)</text>
        <dbReference type="Rhea" id="RHEA:15889"/>
        <dbReference type="ChEBI" id="CHEBI:15377"/>
        <dbReference type="ChEBI" id="CHEBI:28938"/>
        <dbReference type="ChEBI" id="CHEBI:29985"/>
        <dbReference type="ChEBI" id="CHEBI:58359"/>
        <dbReference type="EC" id="3.5.1.2"/>
    </reaction>
</comment>
<comment type="subunit">
    <text evidence="1">Homotetramer.</text>
</comment>
<comment type="similarity">
    <text evidence="1">Belongs to the glutaminase family.</text>
</comment>
<reference key="1">
    <citation type="journal article" date="2008" name="PLoS ONE">
        <title>Genome sequence of Brucella abortus vaccine strain S19 compared to virulent strains yields candidate virulence genes.</title>
        <authorList>
            <person name="Crasta O.R."/>
            <person name="Folkerts O."/>
            <person name="Fei Z."/>
            <person name="Mane S.P."/>
            <person name="Evans C."/>
            <person name="Martino-Catt S."/>
            <person name="Bricker B."/>
            <person name="Yu G."/>
            <person name="Du L."/>
            <person name="Sobral B.W."/>
        </authorList>
    </citation>
    <scope>NUCLEOTIDE SEQUENCE [LARGE SCALE GENOMIC DNA]</scope>
    <source>
        <strain>S19</strain>
    </source>
</reference>
<sequence>MSSSSDAIKAALEKGRAAGLSATGGKNADYIPFLASVPSDLFGLAVVTADGQTFKTGDADIAFAIESISKVFTLALVMEEIGPDSVREKVGADPTGLPFNSVIALELHNGKSLSPLVNAGAIATASLVPGDTADARWNNILECQCGFAGRRLKLSNEVNQSEQTTNFHNRAIAWLLYSAGTCYSDPMEAVDIYTRQCSTLVTATDLATMGATLAAGGVNPISGKRMVSAGNVAPILVEMTMEGLYTALGDWAYTVGLPGKSGVGGGIMAVVPGELAIAAFSPPLDPAGNSVKAMAAVAAVADSLGHNLYTTRGKVSS</sequence>
<feature type="chain" id="PRO_1000115693" description="Glutaminase">
    <location>
        <begin position="1"/>
        <end position="317"/>
    </location>
</feature>
<feature type="binding site" evidence="1">
    <location>
        <position position="67"/>
    </location>
    <ligand>
        <name>substrate</name>
    </ligand>
</feature>
<feature type="binding site" evidence="1">
    <location>
        <position position="118"/>
    </location>
    <ligand>
        <name>substrate</name>
    </ligand>
</feature>
<feature type="binding site" evidence="1">
    <location>
        <position position="162"/>
    </location>
    <ligand>
        <name>substrate</name>
    </ligand>
</feature>
<feature type="binding site" evidence="1">
    <location>
        <position position="169"/>
    </location>
    <ligand>
        <name>substrate</name>
    </ligand>
</feature>
<feature type="binding site" evidence="1">
    <location>
        <position position="193"/>
    </location>
    <ligand>
        <name>substrate</name>
    </ligand>
</feature>
<feature type="binding site" evidence="1">
    <location>
        <position position="245"/>
    </location>
    <ligand>
        <name>substrate</name>
    </ligand>
</feature>
<feature type="binding site" evidence="1">
    <location>
        <position position="263"/>
    </location>
    <ligand>
        <name>substrate</name>
    </ligand>
</feature>
<gene>
    <name evidence="1" type="primary">glsA</name>
    <name type="ordered locus">BAbS19_II07970</name>
</gene>
<accession>B2SBQ3</accession>